<feature type="chain" id="PRO_1000185858" description="NADPH dehydrogenase">
    <location>
        <begin position="1"/>
        <end position="345"/>
    </location>
</feature>
<feature type="binding site" evidence="1">
    <location>
        <begin position="23"/>
        <end position="26"/>
    </location>
    <ligand>
        <name>FMN</name>
        <dbReference type="ChEBI" id="CHEBI:58210"/>
    </ligand>
</feature>
<feature type="binding site" evidence="1">
    <location>
        <position position="28"/>
    </location>
    <ligand>
        <name>substrate</name>
    </ligand>
</feature>
<feature type="binding site" evidence="1">
    <location>
        <position position="60"/>
    </location>
    <ligand>
        <name>FMN</name>
        <dbReference type="ChEBI" id="CHEBI:58210"/>
    </ligand>
</feature>
<feature type="binding site" evidence="1">
    <location>
        <position position="102"/>
    </location>
    <ligand>
        <name>FMN</name>
        <dbReference type="ChEBI" id="CHEBI:58210"/>
    </ligand>
</feature>
<feature type="binding site" evidence="1">
    <location>
        <begin position="164"/>
        <end position="167"/>
    </location>
    <ligand>
        <name>substrate</name>
    </ligand>
</feature>
<feature type="binding site" evidence="1">
    <location>
        <position position="215"/>
    </location>
    <ligand>
        <name>FMN</name>
        <dbReference type="ChEBI" id="CHEBI:58210"/>
    </ligand>
</feature>
<feature type="binding site" evidence="1">
    <location>
        <begin position="307"/>
        <end position="308"/>
    </location>
    <ligand>
        <name>FMN</name>
        <dbReference type="ChEBI" id="CHEBI:58210"/>
    </ligand>
</feature>
<reference key="1">
    <citation type="submission" date="2008-10" db="EMBL/GenBank/DDBJ databases">
        <title>Genome sequence of Bacillus cereus AH820.</title>
        <authorList>
            <person name="Dodson R.J."/>
            <person name="Durkin A.S."/>
            <person name="Rosovitz M.J."/>
            <person name="Rasko D.A."/>
            <person name="Hoffmaster A."/>
            <person name="Ravel J."/>
            <person name="Sutton G."/>
        </authorList>
    </citation>
    <scope>NUCLEOTIDE SEQUENCE [LARGE SCALE GENOMIC DNA]</scope>
    <source>
        <strain>AH820</strain>
    </source>
</reference>
<sequence>MNYKLFSPYTIKDVTLKNRIVMSPMCMYSSENEDGQVTNFHLVHYGTRAAGQVGLVMIEATAVLPGGRISNKDLGIWDDSLIEGLHKTTTFIHDNGAKAAIQLAHAGRKAELETDALAPSAVPFNETMKTPVEMSKHQIKDTVLAFQQAAIRSKQAGFDVIEIHGAHGYLINEFLSPLSNKRTDEYGGSPENRYRFLREIIDSINEVWNGPLFVRISANDYHPDGLTVQDYVQYTKWMKEQGVDLIDCSSGAVVPARIDVYPGYQVQYAKHIKEHANIATGAVGLITTGAQAEQILTNNEADLIFIGRELLRNPYFPRIAANELGFELEEPYQYERAPGKISTNK</sequence>
<accession>B7JKM7</accession>
<evidence type="ECO:0000255" key="1">
    <source>
        <dbReference type="HAMAP-Rule" id="MF_01614"/>
    </source>
</evidence>
<comment type="function">
    <text evidence="1">Catalyzes the reduction of the double bond of an array of alpha,beta-unsaturated aldehydes and ketones. It also reduces the nitro group of nitroester and nitroaromatic compounds. It could have a role in detoxification processes.</text>
</comment>
<comment type="catalytic activity">
    <reaction evidence="1">
        <text>A + NADPH + H(+) = AH2 + NADP(+)</text>
        <dbReference type="Rhea" id="RHEA:13149"/>
        <dbReference type="ChEBI" id="CHEBI:13193"/>
        <dbReference type="ChEBI" id="CHEBI:15378"/>
        <dbReference type="ChEBI" id="CHEBI:17499"/>
        <dbReference type="ChEBI" id="CHEBI:57783"/>
        <dbReference type="ChEBI" id="CHEBI:58349"/>
        <dbReference type="EC" id="1.6.99.1"/>
    </reaction>
</comment>
<comment type="cofactor">
    <cofactor evidence="1">
        <name>FMN</name>
        <dbReference type="ChEBI" id="CHEBI:58210"/>
    </cofactor>
</comment>
<comment type="subunit">
    <text evidence="1">Homotetramer.</text>
</comment>
<comment type="similarity">
    <text evidence="1">Belongs to the NADH:flavin oxidoreductase/NADH oxidase family. NamA subfamily.</text>
</comment>
<dbReference type="EC" id="1.6.99.1" evidence="1"/>
<dbReference type="EMBL" id="CP001283">
    <property type="protein sequence ID" value="ACK91852.1"/>
    <property type="molecule type" value="Genomic_DNA"/>
</dbReference>
<dbReference type="RefSeq" id="WP_001107019.1">
    <property type="nucleotide sequence ID" value="NC_011773.1"/>
</dbReference>
<dbReference type="SMR" id="B7JKM7"/>
<dbReference type="KEGG" id="bcu:BCAH820_2070"/>
<dbReference type="HOGENOM" id="CLU_012153_2_1_9"/>
<dbReference type="Proteomes" id="UP000001363">
    <property type="component" value="Chromosome"/>
</dbReference>
<dbReference type="GO" id="GO:0010181">
    <property type="term" value="F:FMN binding"/>
    <property type="evidence" value="ECO:0007669"/>
    <property type="project" value="UniProtKB-UniRule"/>
</dbReference>
<dbReference type="GO" id="GO:0050661">
    <property type="term" value="F:NADP binding"/>
    <property type="evidence" value="ECO:0007669"/>
    <property type="project" value="UniProtKB-UniRule"/>
</dbReference>
<dbReference type="GO" id="GO:0003959">
    <property type="term" value="F:NADPH dehydrogenase activity"/>
    <property type="evidence" value="ECO:0007669"/>
    <property type="project" value="UniProtKB-UniRule"/>
</dbReference>
<dbReference type="GO" id="GO:0009636">
    <property type="term" value="P:response to toxic substance"/>
    <property type="evidence" value="ECO:0007669"/>
    <property type="project" value="UniProtKB-KW"/>
</dbReference>
<dbReference type="CDD" id="cd02932">
    <property type="entry name" value="OYE_YqiM_FMN"/>
    <property type="match status" value="1"/>
</dbReference>
<dbReference type="Gene3D" id="3.20.20.70">
    <property type="entry name" value="Aldolase class I"/>
    <property type="match status" value="1"/>
</dbReference>
<dbReference type="HAMAP" id="MF_01614">
    <property type="entry name" value="NamA"/>
    <property type="match status" value="1"/>
</dbReference>
<dbReference type="InterPro" id="IPR013785">
    <property type="entry name" value="Aldolase_TIM"/>
</dbReference>
<dbReference type="InterPro" id="IPR023663">
    <property type="entry name" value="NADPH_DH_bac"/>
</dbReference>
<dbReference type="InterPro" id="IPR001155">
    <property type="entry name" value="OxRdtase_FMN_N"/>
</dbReference>
<dbReference type="InterPro" id="IPR044152">
    <property type="entry name" value="YqjM-like"/>
</dbReference>
<dbReference type="NCBIfam" id="NF010047">
    <property type="entry name" value="PRK13523.1"/>
    <property type="match status" value="1"/>
</dbReference>
<dbReference type="PANTHER" id="PTHR43303">
    <property type="entry name" value="NADPH DEHYDROGENASE C23G7.10C-RELATED"/>
    <property type="match status" value="1"/>
</dbReference>
<dbReference type="PANTHER" id="PTHR43303:SF4">
    <property type="entry name" value="NADPH DEHYDROGENASE C23G7.10C-RELATED"/>
    <property type="match status" value="1"/>
</dbReference>
<dbReference type="Pfam" id="PF00724">
    <property type="entry name" value="Oxidored_FMN"/>
    <property type="match status" value="1"/>
</dbReference>
<dbReference type="SUPFAM" id="SSF51395">
    <property type="entry name" value="FMN-linked oxidoreductases"/>
    <property type="match status" value="1"/>
</dbReference>
<protein>
    <recommendedName>
        <fullName evidence="1">NADPH dehydrogenase</fullName>
        <ecNumber evidence="1">1.6.99.1</ecNumber>
    </recommendedName>
</protein>
<keyword id="KW-0216">Detoxification</keyword>
<keyword id="KW-0285">Flavoprotein</keyword>
<keyword id="KW-0288">FMN</keyword>
<keyword id="KW-0521">NADP</keyword>
<keyword id="KW-0560">Oxidoreductase</keyword>
<gene>
    <name evidence="1" type="primary">namA</name>
    <name type="ordered locus">BCAH820_2070</name>
</gene>
<organism>
    <name type="scientific">Bacillus cereus (strain AH820)</name>
    <dbReference type="NCBI Taxonomy" id="405535"/>
    <lineage>
        <taxon>Bacteria</taxon>
        <taxon>Bacillati</taxon>
        <taxon>Bacillota</taxon>
        <taxon>Bacilli</taxon>
        <taxon>Bacillales</taxon>
        <taxon>Bacillaceae</taxon>
        <taxon>Bacillus</taxon>
        <taxon>Bacillus cereus group</taxon>
    </lineage>
</organism>
<proteinExistence type="inferred from homology"/>
<name>NAMA_BACC0</name>